<accession>B2UB97</accession>
<proteinExistence type="inferred from homology"/>
<organism>
    <name type="scientific">Ralstonia pickettii (strain 12J)</name>
    <dbReference type="NCBI Taxonomy" id="402626"/>
    <lineage>
        <taxon>Bacteria</taxon>
        <taxon>Pseudomonadati</taxon>
        <taxon>Pseudomonadota</taxon>
        <taxon>Betaproteobacteria</taxon>
        <taxon>Burkholderiales</taxon>
        <taxon>Burkholderiaceae</taxon>
        <taxon>Ralstonia</taxon>
    </lineage>
</organism>
<feature type="chain" id="PRO_1000136111" description="Glycerol-3-phosphate acyltransferase">
    <location>
        <begin position="1"/>
        <end position="207"/>
    </location>
</feature>
<feature type="transmembrane region" description="Helical" evidence="1">
    <location>
        <begin position="4"/>
        <end position="24"/>
    </location>
</feature>
<feature type="transmembrane region" description="Helical" evidence="1">
    <location>
        <begin position="58"/>
        <end position="78"/>
    </location>
</feature>
<feature type="transmembrane region" description="Helical" evidence="1">
    <location>
        <begin position="86"/>
        <end position="106"/>
    </location>
</feature>
<feature type="transmembrane region" description="Helical" evidence="1">
    <location>
        <begin position="120"/>
        <end position="140"/>
    </location>
</feature>
<feature type="transmembrane region" description="Helical" evidence="1">
    <location>
        <begin position="162"/>
        <end position="182"/>
    </location>
</feature>
<dbReference type="EC" id="2.3.1.275" evidence="1"/>
<dbReference type="EMBL" id="CP001068">
    <property type="protein sequence ID" value="ACD27946.1"/>
    <property type="molecule type" value="Genomic_DNA"/>
</dbReference>
<dbReference type="SMR" id="B2UB97"/>
<dbReference type="STRING" id="402626.Rpic_2823"/>
<dbReference type="KEGG" id="rpi:Rpic_2823"/>
<dbReference type="eggNOG" id="COG0344">
    <property type="taxonomic scope" value="Bacteria"/>
</dbReference>
<dbReference type="HOGENOM" id="CLU_081254_0_0_4"/>
<dbReference type="UniPathway" id="UPA00085"/>
<dbReference type="GO" id="GO:0005886">
    <property type="term" value="C:plasma membrane"/>
    <property type="evidence" value="ECO:0007669"/>
    <property type="project" value="UniProtKB-SubCell"/>
</dbReference>
<dbReference type="GO" id="GO:0043772">
    <property type="term" value="F:acyl-phosphate glycerol-3-phosphate acyltransferase activity"/>
    <property type="evidence" value="ECO:0007669"/>
    <property type="project" value="UniProtKB-UniRule"/>
</dbReference>
<dbReference type="GO" id="GO:0008654">
    <property type="term" value="P:phospholipid biosynthetic process"/>
    <property type="evidence" value="ECO:0007669"/>
    <property type="project" value="UniProtKB-UniRule"/>
</dbReference>
<dbReference type="HAMAP" id="MF_01043">
    <property type="entry name" value="PlsY"/>
    <property type="match status" value="1"/>
</dbReference>
<dbReference type="InterPro" id="IPR003811">
    <property type="entry name" value="G3P_acylTferase_PlsY"/>
</dbReference>
<dbReference type="NCBIfam" id="TIGR00023">
    <property type="entry name" value="glycerol-3-phosphate 1-O-acyltransferase PlsY"/>
    <property type="match status" value="1"/>
</dbReference>
<dbReference type="PANTHER" id="PTHR30309:SF0">
    <property type="entry name" value="GLYCEROL-3-PHOSPHATE ACYLTRANSFERASE-RELATED"/>
    <property type="match status" value="1"/>
</dbReference>
<dbReference type="PANTHER" id="PTHR30309">
    <property type="entry name" value="INNER MEMBRANE PROTEIN YGIH"/>
    <property type="match status" value="1"/>
</dbReference>
<dbReference type="Pfam" id="PF02660">
    <property type="entry name" value="G3P_acyltransf"/>
    <property type="match status" value="1"/>
</dbReference>
<dbReference type="SMART" id="SM01207">
    <property type="entry name" value="G3P_acyltransf"/>
    <property type="match status" value="1"/>
</dbReference>
<comment type="function">
    <text evidence="1">Catalyzes the transfer of an acyl group from acyl-phosphate (acyl-PO(4)) to glycerol-3-phosphate (G3P) to form lysophosphatidic acid (LPA). This enzyme utilizes acyl-phosphate as fatty acyl donor, but not acyl-CoA or acyl-ACP.</text>
</comment>
<comment type="catalytic activity">
    <reaction evidence="1">
        <text>an acyl phosphate + sn-glycerol 3-phosphate = a 1-acyl-sn-glycero-3-phosphate + phosphate</text>
        <dbReference type="Rhea" id="RHEA:34075"/>
        <dbReference type="ChEBI" id="CHEBI:43474"/>
        <dbReference type="ChEBI" id="CHEBI:57597"/>
        <dbReference type="ChEBI" id="CHEBI:57970"/>
        <dbReference type="ChEBI" id="CHEBI:59918"/>
        <dbReference type="EC" id="2.3.1.275"/>
    </reaction>
</comment>
<comment type="pathway">
    <text evidence="1">Lipid metabolism; phospholipid metabolism.</text>
</comment>
<comment type="subunit">
    <text evidence="1">Probably interacts with PlsX.</text>
</comment>
<comment type="subcellular location">
    <subcellularLocation>
        <location evidence="1">Cell inner membrane</location>
        <topology evidence="1">Multi-pass membrane protein</topology>
    </subcellularLocation>
</comment>
<comment type="similarity">
    <text evidence="1">Belongs to the PlsY family.</text>
</comment>
<protein>
    <recommendedName>
        <fullName evidence="1">Glycerol-3-phosphate acyltransferase</fullName>
    </recommendedName>
    <alternativeName>
        <fullName evidence="1">Acyl-PO4 G3P acyltransferase</fullName>
    </alternativeName>
    <alternativeName>
        <fullName evidence="1">Acyl-phosphate--glycerol-3-phosphate acyltransferase</fullName>
    </alternativeName>
    <alternativeName>
        <fullName evidence="1">G3P acyltransferase</fullName>
        <shortName evidence="1">GPAT</shortName>
        <ecNumber evidence="1">2.3.1.275</ecNumber>
    </alternativeName>
    <alternativeName>
        <fullName evidence="1">Lysophosphatidic acid synthase</fullName>
        <shortName evidence="1">LPA synthase</shortName>
    </alternativeName>
</protein>
<evidence type="ECO:0000255" key="1">
    <source>
        <dbReference type="HAMAP-Rule" id="MF_01043"/>
    </source>
</evidence>
<reference key="1">
    <citation type="submission" date="2008-05" db="EMBL/GenBank/DDBJ databases">
        <title>Complete sequence of chromosome 1 of Ralstonia pickettii 12J.</title>
        <authorList>
            <person name="Lucas S."/>
            <person name="Copeland A."/>
            <person name="Lapidus A."/>
            <person name="Glavina del Rio T."/>
            <person name="Dalin E."/>
            <person name="Tice H."/>
            <person name="Bruce D."/>
            <person name="Goodwin L."/>
            <person name="Pitluck S."/>
            <person name="Meincke L."/>
            <person name="Brettin T."/>
            <person name="Detter J.C."/>
            <person name="Han C."/>
            <person name="Kuske C.R."/>
            <person name="Schmutz J."/>
            <person name="Larimer F."/>
            <person name="Land M."/>
            <person name="Hauser L."/>
            <person name="Kyrpides N."/>
            <person name="Mikhailova N."/>
            <person name="Marsh T."/>
            <person name="Richardson P."/>
        </authorList>
    </citation>
    <scope>NUCLEOTIDE SEQUENCE [LARGE SCALE GENOMIC DNA]</scope>
    <source>
        <strain>12J</strain>
    </source>
</reference>
<gene>
    <name evidence="1" type="primary">plsY</name>
    <name type="ordered locus">Rpic_2823</name>
</gene>
<name>PLSY_RALPJ</name>
<sequence>MSPVVATVIFALAAYLIGSISFAVVVSRAMGLADPRTYGSGNPGATNVLRSGNKKAAILTLLGDAAKGGLAVWLAQWLAPRFGVDETGIALVVIAVFLGHLFPVFHRFEGGKGVATAAGILLALNVWLGLATLATWLIIAVFFRYSSLAALVSAVFAPFFYVLMNGFDWIAGAVALMAVLLIARHRANIAKLLAGKESRIGEKKKAA</sequence>
<keyword id="KW-0997">Cell inner membrane</keyword>
<keyword id="KW-1003">Cell membrane</keyword>
<keyword id="KW-0444">Lipid biosynthesis</keyword>
<keyword id="KW-0443">Lipid metabolism</keyword>
<keyword id="KW-0472">Membrane</keyword>
<keyword id="KW-0594">Phospholipid biosynthesis</keyword>
<keyword id="KW-1208">Phospholipid metabolism</keyword>
<keyword id="KW-0808">Transferase</keyword>
<keyword id="KW-0812">Transmembrane</keyword>
<keyword id="KW-1133">Transmembrane helix</keyword>